<reference key="1">
    <citation type="journal article" date="1996" name="Nucleic Acids Res.">
        <title>Complete sequence analysis of the genome of the bacterium Mycoplasma pneumoniae.</title>
        <authorList>
            <person name="Himmelreich R."/>
            <person name="Hilbert H."/>
            <person name="Plagens H."/>
            <person name="Pirkl E."/>
            <person name="Li B.-C."/>
            <person name="Herrmann R."/>
        </authorList>
    </citation>
    <scope>NUCLEOTIDE SEQUENCE [LARGE SCALE GENOMIC DNA]</scope>
    <source>
        <strain>ATCC 29342 / M129 / Subtype 1</strain>
    </source>
</reference>
<name>Y086_MYCPN</name>
<keyword id="KW-1003">Cell membrane</keyword>
<keyword id="KW-0472">Membrane</keyword>
<keyword id="KW-1185">Reference proteome</keyword>
<keyword id="KW-0812">Transmembrane</keyword>
<keyword id="KW-1133">Transmembrane helix</keyword>
<proteinExistence type="predicted"/>
<organism>
    <name type="scientific">Mycoplasma pneumoniae (strain ATCC 29342 / M129 / Subtype 1)</name>
    <name type="common">Mycoplasmoides pneumoniae</name>
    <dbReference type="NCBI Taxonomy" id="272634"/>
    <lineage>
        <taxon>Bacteria</taxon>
        <taxon>Bacillati</taxon>
        <taxon>Mycoplasmatota</taxon>
        <taxon>Mycoplasmoidales</taxon>
        <taxon>Mycoplasmoidaceae</taxon>
        <taxon>Mycoplasmoides</taxon>
    </lineage>
</organism>
<feature type="chain" id="PRO_0000210637" description="Uncharacterized protein MPN_086">
    <location>
        <begin position="1"/>
        <end position="105"/>
    </location>
</feature>
<feature type="transmembrane region" description="Helical" evidence="1">
    <location>
        <begin position="26"/>
        <end position="46"/>
    </location>
</feature>
<feature type="transmembrane region" description="Helical" evidence="1">
    <location>
        <begin position="66"/>
        <end position="86"/>
    </location>
</feature>
<dbReference type="EMBL" id="U00089">
    <property type="protein sequence ID" value="AAB95717.1"/>
    <property type="molecule type" value="Genomic_DNA"/>
</dbReference>
<dbReference type="PIR" id="S73395">
    <property type="entry name" value="S73395"/>
</dbReference>
<dbReference type="RefSeq" id="NP_109774.1">
    <property type="nucleotide sequence ID" value="NC_000912.1"/>
</dbReference>
<dbReference type="RefSeq" id="WP_010874443.1">
    <property type="nucleotide sequence ID" value="NZ_OU342337.1"/>
</dbReference>
<dbReference type="SMR" id="P75607"/>
<dbReference type="STRING" id="272634.MPN_086"/>
<dbReference type="EnsemblBacteria" id="AAB95717">
    <property type="protein sequence ID" value="AAB95717"/>
    <property type="gene ID" value="MPN_086"/>
</dbReference>
<dbReference type="KEGG" id="mpn:MPN_086"/>
<dbReference type="HOGENOM" id="CLU_2233568_0_0_14"/>
<dbReference type="BioCyc" id="MPNE272634:G1GJ3-138-MONOMER"/>
<dbReference type="Proteomes" id="UP000000808">
    <property type="component" value="Chromosome"/>
</dbReference>
<dbReference type="GO" id="GO:0005886">
    <property type="term" value="C:plasma membrane"/>
    <property type="evidence" value="ECO:0007669"/>
    <property type="project" value="UniProtKB-SubCell"/>
</dbReference>
<comment type="subcellular location">
    <subcellularLocation>
        <location evidence="2">Cell membrane</location>
        <topology evidence="2">Multi-pass membrane protein</topology>
    </subcellularLocation>
</comment>
<sequence length="105" mass="12074">MESALNQEFQIDFCVKNKKLLKILANVLIASWLSFVVFLILGCIAIDLFRFDLYSQFFFNHLSTLSALAWTFFVLAILFGAATLAINGFFYKEIRKKSAFKEDSK</sequence>
<evidence type="ECO:0000255" key="1"/>
<evidence type="ECO:0000305" key="2"/>
<accession>P75607</accession>
<protein>
    <recommendedName>
        <fullName>Uncharacterized protein MPN_086</fullName>
    </recommendedName>
</protein>
<gene>
    <name type="ordered locus">MPN_086</name>
    <name type="ORF">MP069</name>
    <name type="ORF">R02_orf105</name>
</gene>